<evidence type="ECO:0000250" key="1"/>
<evidence type="ECO:0000255" key="2"/>
<evidence type="ECO:0000255" key="3">
    <source>
        <dbReference type="PROSITE-ProRule" id="PRU00441"/>
    </source>
</evidence>
<evidence type="ECO:0000305" key="4"/>
<feature type="chain" id="PRO_0000060122" description="Nickel transport system permease protein NikC">
    <location>
        <begin position="1"/>
        <end position="277"/>
    </location>
</feature>
<feature type="topological domain" description="Cytoplasmic" evidence="2">
    <location>
        <begin position="1"/>
        <end position="12"/>
    </location>
</feature>
<feature type="transmembrane region" description="Helical" evidence="3">
    <location>
        <begin position="13"/>
        <end position="33"/>
    </location>
</feature>
<feature type="topological domain" description="Periplasmic" evidence="2">
    <location>
        <begin position="34"/>
        <end position="78"/>
    </location>
</feature>
<feature type="transmembrane region" description="Helical" evidence="3">
    <location>
        <begin position="79"/>
        <end position="99"/>
    </location>
</feature>
<feature type="topological domain" description="Cytoplasmic" evidence="2">
    <location>
        <begin position="100"/>
        <end position="120"/>
    </location>
</feature>
<feature type="transmembrane region" description="Helical" evidence="3">
    <location>
        <begin position="121"/>
        <end position="141"/>
    </location>
</feature>
<feature type="topological domain" description="Periplasmic" evidence="2">
    <location>
        <begin position="142"/>
        <end position="183"/>
    </location>
</feature>
<feature type="transmembrane region" description="Helical" evidence="3">
    <location>
        <begin position="184"/>
        <end position="204"/>
    </location>
</feature>
<feature type="topological domain" description="Cytoplasmic" evidence="2">
    <location>
        <begin position="205"/>
        <end position="207"/>
    </location>
</feature>
<feature type="transmembrane region" description="Helical" evidence="3">
    <location>
        <begin position="208"/>
        <end position="228"/>
    </location>
</feature>
<feature type="topological domain" description="Periplasmic" evidence="2">
    <location>
        <begin position="229"/>
        <end position="239"/>
    </location>
</feature>
<feature type="transmembrane region" description="Helical" evidence="3">
    <location>
        <begin position="240"/>
        <end position="260"/>
    </location>
</feature>
<feature type="topological domain" description="Cytoplasmic" evidence="2">
    <location>
        <begin position="261"/>
        <end position="277"/>
    </location>
</feature>
<feature type="domain" description="ABC transmembrane type-1" evidence="3">
    <location>
        <begin position="67"/>
        <end position="260"/>
    </location>
</feature>
<reference key="1">
    <citation type="journal article" date="2001" name="Nature">
        <title>Genome sequence of enterohaemorrhagic Escherichia coli O157:H7.</title>
        <authorList>
            <person name="Perna N.T."/>
            <person name="Plunkett G. III"/>
            <person name="Burland V."/>
            <person name="Mau B."/>
            <person name="Glasner J.D."/>
            <person name="Rose D.J."/>
            <person name="Mayhew G.F."/>
            <person name="Evans P.S."/>
            <person name="Gregor J."/>
            <person name="Kirkpatrick H.A."/>
            <person name="Posfai G."/>
            <person name="Hackett J."/>
            <person name="Klink S."/>
            <person name="Boutin A."/>
            <person name="Shao Y."/>
            <person name="Miller L."/>
            <person name="Grotbeck E.J."/>
            <person name="Davis N.W."/>
            <person name="Lim A."/>
            <person name="Dimalanta E.T."/>
            <person name="Potamousis K."/>
            <person name="Apodaca J."/>
            <person name="Anantharaman T.S."/>
            <person name="Lin J."/>
            <person name="Yen G."/>
            <person name="Schwartz D.C."/>
            <person name="Welch R.A."/>
            <person name="Blattner F.R."/>
        </authorList>
    </citation>
    <scope>NUCLEOTIDE SEQUENCE [LARGE SCALE GENOMIC DNA]</scope>
    <source>
        <strain>O157:H7 / EDL933 / ATCC 700927 / EHEC</strain>
    </source>
</reference>
<reference key="2">
    <citation type="journal article" date="2001" name="DNA Res.">
        <title>Complete genome sequence of enterohemorrhagic Escherichia coli O157:H7 and genomic comparison with a laboratory strain K-12.</title>
        <authorList>
            <person name="Hayashi T."/>
            <person name="Makino K."/>
            <person name="Ohnishi M."/>
            <person name="Kurokawa K."/>
            <person name="Ishii K."/>
            <person name="Yokoyama K."/>
            <person name="Han C.-G."/>
            <person name="Ohtsubo E."/>
            <person name="Nakayama K."/>
            <person name="Murata T."/>
            <person name="Tanaka M."/>
            <person name="Tobe T."/>
            <person name="Iida T."/>
            <person name="Takami H."/>
            <person name="Honda T."/>
            <person name="Sasakawa C."/>
            <person name="Ogasawara N."/>
            <person name="Yasunaga T."/>
            <person name="Kuhara S."/>
            <person name="Shiba T."/>
            <person name="Hattori M."/>
            <person name="Shinagawa H."/>
        </authorList>
    </citation>
    <scope>NUCLEOTIDE SEQUENCE [LARGE SCALE GENOMIC DNA]</scope>
    <source>
        <strain>O157:H7 / Sakai / RIMD 0509952 / EHEC</strain>
    </source>
</reference>
<keyword id="KW-0997">Cell inner membrane</keyword>
<keyword id="KW-1003">Cell membrane</keyword>
<keyword id="KW-0406">Ion transport</keyword>
<keyword id="KW-0472">Membrane</keyword>
<keyword id="KW-0533">Nickel</keyword>
<keyword id="KW-0921">Nickel transport</keyword>
<keyword id="KW-1185">Reference proteome</keyword>
<keyword id="KW-0812">Transmembrane</keyword>
<keyword id="KW-1133">Transmembrane helix</keyword>
<keyword id="KW-0813">Transport</keyword>
<proteinExistence type="inferred from homology"/>
<protein>
    <recommendedName>
        <fullName>Nickel transport system permease protein NikC</fullName>
    </recommendedName>
</protein>
<organism>
    <name type="scientific">Escherichia coli O157:H7</name>
    <dbReference type="NCBI Taxonomy" id="83334"/>
    <lineage>
        <taxon>Bacteria</taxon>
        <taxon>Pseudomonadati</taxon>
        <taxon>Pseudomonadota</taxon>
        <taxon>Gammaproteobacteria</taxon>
        <taxon>Enterobacterales</taxon>
        <taxon>Enterobacteriaceae</taxon>
        <taxon>Escherichia</taxon>
    </lineage>
</organism>
<dbReference type="EMBL" id="AE005174">
    <property type="protein sequence ID" value="AAG58605.1"/>
    <property type="molecule type" value="Genomic_DNA"/>
</dbReference>
<dbReference type="EMBL" id="BA000007">
    <property type="protein sequence ID" value="BAB37768.1"/>
    <property type="molecule type" value="Genomic_DNA"/>
</dbReference>
<dbReference type="PIR" id="A86018">
    <property type="entry name" value="A86018"/>
</dbReference>
<dbReference type="PIR" id="A91172">
    <property type="entry name" value="A91172"/>
</dbReference>
<dbReference type="RefSeq" id="NP_312372.1">
    <property type="nucleotide sequence ID" value="NC_002695.1"/>
</dbReference>
<dbReference type="RefSeq" id="WP_001008963.1">
    <property type="nucleotide sequence ID" value="NZ_VOAI01000004.1"/>
</dbReference>
<dbReference type="SMR" id="P0AFB0"/>
<dbReference type="STRING" id="155864.Z4870"/>
<dbReference type="GeneID" id="915805"/>
<dbReference type="GeneID" id="93778513"/>
<dbReference type="KEGG" id="ece:Z4870"/>
<dbReference type="KEGG" id="ecs:ECs_4345"/>
<dbReference type="PATRIC" id="fig|386585.9.peg.4538"/>
<dbReference type="eggNOG" id="COG1173">
    <property type="taxonomic scope" value="Bacteria"/>
</dbReference>
<dbReference type="HOGENOM" id="CLU_028518_1_1_6"/>
<dbReference type="OMA" id="FVPQYFR"/>
<dbReference type="Proteomes" id="UP000000558">
    <property type="component" value="Chromosome"/>
</dbReference>
<dbReference type="Proteomes" id="UP000002519">
    <property type="component" value="Chromosome"/>
</dbReference>
<dbReference type="GO" id="GO:0005886">
    <property type="term" value="C:plasma membrane"/>
    <property type="evidence" value="ECO:0007669"/>
    <property type="project" value="UniProtKB-SubCell"/>
</dbReference>
<dbReference type="GO" id="GO:0071916">
    <property type="term" value="F:dipeptide transmembrane transporter activity"/>
    <property type="evidence" value="ECO:0007669"/>
    <property type="project" value="TreeGrafter"/>
</dbReference>
<dbReference type="GO" id="GO:0015099">
    <property type="term" value="F:nickel cation transmembrane transporter activity"/>
    <property type="evidence" value="ECO:0007669"/>
    <property type="project" value="InterPro"/>
</dbReference>
<dbReference type="CDD" id="cd06261">
    <property type="entry name" value="TM_PBP2"/>
    <property type="match status" value="1"/>
</dbReference>
<dbReference type="FunFam" id="1.10.3720.10:FF:000038">
    <property type="entry name" value="Nickel ABC transporter permease subunit NikC"/>
    <property type="match status" value="1"/>
</dbReference>
<dbReference type="Gene3D" id="1.10.3720.10">
    <property type="entry name" value="MetI-like"/>
    <property type="match status" value="1"/>
</dbReference>
<dbReference type="InterPro" id="IPR050366">
    <property type="entry name" value="BP-dependent_transpt_permease"/>
</dbReference>
<dbReference type="InterPro" id="IPR000515">
    <property type="entry name" value="MetI-like"/>
</dbReference>
<dbReference type="InterPro" id="IPR035906">
    <property type="entry name" value="MetI-like_sf"/>
</dbReference>
<dbReference type="InterPro" id="IPR014157">
    <property type="entry name" value="Nickel_NikC"/>
</dbReference>
<dbReference type="NCBIfam" id="TIGR02790">
    <property type="entry name" value="nickel_nikC"/>
    <property type="match status" value="1"/>
</dbReference>
<dbReference type="NCBIfam" id="NF007738">
    <property type="entry name" value="PRK10417.1"/>
    <property type="match status" value="1"/>
</dbReference>
<dbReference type="PANTHER" id="PTHR43386:SF1">
    <property type="entry name" value="D,D-DIPEPTIDE TRANSPORT SYSTEM PERMEASE PROTEIN DDPC-RELATED"/>
    <property type="match status" value="1"/>
</dbReference>
<dbReference type="PANTHER" id="PTHR43386">
    <property type="entry name" value="OLIGOPEPTIDE TRANSPORT SYSTEM PERMEASE PROTEIN APPC"/>
    <property type="match status" value="1"/>
</dbReference>
<dbReference type="Pfam" id="PF00528">
    <property type="entry name" value="BPD_transp_1"/>
    <property type="match status" value="1"/>
</dbReference>
<dbReference type="SUPFAM" id="SSF161098">
    <property type="entry name" value="MetI-like"/>
    <property type="match status" value="1"/>
</dbReference>
<dbReference type="PROSITE" id="PS50928">
    <property type="entry name" value="ABC_TM1"/>
    <property type="match status" value="1"/>
</dbReference>
<sequence length="277" mass="30362">MNFFLSSRWSVRLALIIIALLALIALTSQWWLPYDPQAIDLPSRLLSPDAQHWLGTDHLGRDIFSRLMAATRVSLGSVMACLLLVLTLGLVIGGSAGLIGGRVDQATMRVADMFMTFPTSILSFFMVGVLGTGLTNVIIAIALSHWAWYARMVRSLVISLRQREFVLASRLSGAGHVRVFVDHLAGAVIPSLLVLATLDIGHMMLHVAGMSFLGLGVTAPTAEWGVMINDARQYIWTQPLQMFWPGLALFISVMAFNLVGDALRDHLDPHLVTEHAH</sequence>
<accession>P0AFB0</accession>
<accession>P33592</accession>
<gene>
    <name type="primary">nikC</name>
    <name type="ordered locus">Z4870</name>
    <name type="ordered locus">ECs4345</name>
</gene>
<comment type="function">
    <text evidence="1">Involved in a nickel transport system, probably translocates nickel through the bacterial inner membrane.</text>
</comment>
<comment type="subunit">
    <text evidence="1">Probably forms a heterodimeric pore with NikB.</text>
</comment>
<comment type="subcellular location">
    <subcellularLocation>
        <location evidence="1">Cell inner membrane</location>
        <topology evidence="3">Multi-pass membrane protein</topology>
    </subcellularLocation>
</comment>
<comment type="similarity">
    <text evidence="4">Belongs to the binding-protein-dependent transport system permease family. OppBC subfamily.</text>
</comment>
<name>NIKC_ECO57</name>